<feature type="chain" id="PRO_0000337514" description="Elongation factor Tu">
    <location>
        <begin position="1"/>
        <end position="394"/>
    </location>
</feature>
<feature type="domain" description="tr-type G">
    <location>
        <begin position="10"/>
        <end position="204"/>
    </location>
</feature>
<feature type="region of interest" description="G1" evidence="1">
    <location>
        <begin position="19"/>
        <end position="26"/>
    </location>
</feature>
<feature type="region of interest" description="G2" evidence="1">
    <location>
        <begin position="60"/>
        <end position="64"/>
    </location>
</feature>
<feature type="region of interest" description="G3" evidence="1">
    <location>
        <begin position="81"/>
        <end position="84"/>
    </location>
</feature>
<feature type="region of interest" description="G4" evidence="1">
    <location>
        <begin position="136"/>
        <end position="139"/>
    </location>
</feature>
<feature type="region of interest" description="G5" evidence="1">
    <location>
        <begin position="174"/>
        <end position="176"/>
    </location>
</feature>
<feature type="binding site" evidence="2">
    <location>
        <begin position="19"/>
        <end position="26"/>
    </location>
    <ligand>
        <name>GTP</name>
        <dbReference type="ChEBI" id="CHEBI:37565"/>
    </ligand>
</feature>
<feature type="binding site" evidence="2">
    <location>
        <position position="26"/>
    </location>
    <ligand>
        <name>Mg(2+)</name>
        <dbReference type="ChEBI" id="CHEBI:18420"/>
    </ligand>
</feature>
<feature type="binding site" evidence="2">
    <location>
        <begin position="81"/>
        <end position="85"/>
    </location>
    <ligand>
        <name>GTP</name>
        <dbReference type="ChEBI" id="CHEBI:37565"/>
    </ligand>
</feature>
<feature type="binding site" evidence="2">
    <location>
        <begin position="136"/>
        <end position="139"/>
    </location>
    <ligand>
        <name>GTP</name>
        <dbReference type="ChEBI" id="CHEBI:37565"/>
    </ligand>
</feature>
<gene>
    <name evidence="2" type="primary">tuf1</name>
    <name type="synonym">tufA</name>
    <name type="ordered locus">SPA3311</name>
</gene>
<gene>
    <name evidence="2" type="primary">tuf2</name>
    <name type="synonym">tufB</name>
    <name type="ordered locus">SPA3984</name>
</gene>
<accession>Q5PIW4</accession>
<proteinExistence type="inferred from homology"/>
<protein>
    <recommendedName>
        <fullName evidence="2">Elongation factor Tu</fullName>
        <shortName evidence="2">EF-Tu</shortName>
        <ecNumber evidence="2">3.6.5.3</ecNumber>
    </recommendedName>
</protein>
<dbReference type="EC" id="3.6.5.3" evidence="2"/>
<dbReference type="EMBL" id="CP000026">
    <property type="protein sequence ID" value="AAV79127.1"/>
    <property type="molecule type" value="Genomic_DNA"/>
</dbReference>
<dbReference type="EMBL" id="CP000026">
    <property type="protein sequence ID" value="AAV79736.1"/>
    <property type="molecule type" value="Genomic_DNA"/>
</dbReference>
<dbReference type="SMR" id="Q5PIW4"/>
<dbReference type="KEGG" id="spt:SPA3311"/>
<dbReference type="KEGG" id="spt:SPA3984"/>
<dbReference type="HOGENOM" id="CLU_007265_0_2_6"/>
<dbReference type="Proteomes" id="UP000008185">
    <property type="component" value="Chromosome"/>
</dbReference>
<dbReference type="GO" id="GO:0005829">
    <property type="term" value="C:cytosol"/>
    <property type="evidence" value="ECO:0007669"/>
    <property type="project" value="TreeGrafter"/>
</dbReference>
<dbReference type="GO" id="GO:0005525">
    <property type="term" value="F:GTP binding"/>
    <property type="evidence" value="ECO:0007669"/>
    <property type="project" value="UniProtKB-UniRule"/>
</dbReference>
<dbReference type="GO" id="GO:0003924">
    <property type="term" value="F:GTPase activity"/>
    <property type="evidence" value="ECO:0007669"/>
    <property type="project" value="InterPro"/>
</dbReference>
<dbReference type="GO" id="GO:0097216">
    <property type="term" value="F:guanosine tetraphosphate binding"/>
    <property type="evidence" value="ECO:0007669"/>
    <property type="project" value="UniProtKB-ARBA"/>
</dbReference>
<dbReference type="GO" id="GO:0003746">
    <property type="term" value="F:translation elongation factor activity"/>
    <property type="evidence" value="ECO:0007669"/>
    <property type="project" value="UniProtKB-UniRule"/>
</dbReference>
<dbReference type="CDD" id="cd01884">
    <property type="entry name" value="EF_Tu"/>
    <property type="match status" value="1"/>
</dbReference>
<dbReference type="CDD" id="cd03697">
    <property type="entry name" value="EFTU_II"/>
    <property type="match status" value="1"/>
</dbReference>
<dbReference type="CDD" id="cd03707">
    <property type="entry name" value="EFTU_III"/>
    <property type="match status" value="1"/>
</dbReference>
<dbReference type="FunFam" id="2.40.30.10:FF:000001">
    <property type="entry name" value="Elongation factor Tu"/>
    <property type="match status" value="1"/>
</dbReference>
<dbReference type="FunFam" id="3.40.50.300:FF:000003">
    <property type="entry name" value="Elongation factor Tu"/>
    <property type="match status" value="1"/>
</dbReference>
<dbReference type="Gene3D" id="3.40.50.300">
    <property type="entry name" value="P-loop containing nucleotide triphosphate hydrolases"/>
    <property type="match status" value="1"/>
</dbReference>
<dbReference type="Gene3D" id="2.40.30.10">
    <property type="entry name" value="Translation factors"/>
    <property type="match status" value="2"/>
</dbReference>
<dbReference type="HAMAP" id="MF_00118_B">
    <property type="entry name" value="EF_Tu_B"/>
    <property type="match status" value="1"/>
</dbReference>
<dbReference type="InterPro" id="IPR041709">
    <property type="entry name" value="EF-Tu_GTP-bd"/>
</dbReference>
<dbReference type="InterPro" id="IPR050055">
    <property type="entry name" value="EF-Tu_GTPase"/>
</dbReference>
<dbReference type="InterPro" id="IPR004161">
    <property type="entry name" value="EFTu-like_2"/>
</dbReference>
<dbReference type="InterPro" id="IPR033720">
    <property type="entry name" value="EFTU_2"/>
</dbReference>
<dbReference type="InterPro" id="IPR031157">
    <property type="entry name" value="G_TR_CS"/>
</dbReference>
<dbReference type="InterPro" id="IPR027417">
    <property type="entry name" value="P-loop_NTPase"/>
</dbReference>
<dbReference type="InterPro" id="IPR005225">
    <property type="entry name" value="Small_GTP-bd"/>
</dbReference>
<dbReference type="InterPro" id="IPR000795">
    <property type="entry name" value="T_Tr_GTP-bd_dom"/>
</dbReference>
<dbReference type="InterPro" id="IPR009000">
    <property type="entry name" value="Transl_B-barrel_sf"/>
</dbReference>
<dbReference type="InterPro" id="IPR009001">
    <property type="entry name" value="Transl_elong_EF1A/Init_IF2_C"/>
</dbReference>
<dbReference type="InterPro" id="IPR004541">
    <property type="entry name" value="Transl_elong_EFTu/EF1A_bac/org"/>
</dbReference>
<dbReference type="InterPro" id="IPR004160">
    <property type="entry name" value="Transl_elong_EFTu/EF1A_C"/>
</dbReference>
<dbReference type="NCBIfam" id="TIGR00485">
    <property type="entry name" value="EF-Tu"/>
    <property type="match status" value="1"/>
</dbReference>
<dbReference type="NCBIfam" id="NF000766">
    <property type="entry name" value="PRK00049.1"/>
    <property type="match status" value="1"/>
</dbReference>
<dbReference type="NCBIfam" id="NF009372">
    <property type="entry name" value="PRK12735.1"/>
    <property type="match status" value="1"/>
</dbReference>
<dbReference type="NCBIfam" id="NF009373">
    <property type="entry name" value="PRK12736.1"/>
    <property type="match status" value="1"/>
</dbReference>
<dbReference type="NCBIfam" id="TIGR00231">
    <property type="entry name" value="small_GTP"/>
    <property type="match status" value="1"/>
</dbReference>
<dbReference type="PANTHER" id="PTHR43721:SF22">
    <property type="entry name" value="ELONGATION FACTOR TU, MITOCHONDRIAL"/>
    <property type="match status" value="1"/>
</dbReference>
<dbReference type="PANTHER" id="PTHR43721">
    <property type="entry name" value="ELONGATION FACTOR TU-RELATED"/>
    <property type="match status" value="1"/>
</dbReference>
<dbReference type="Pfam" id="PF00009">
    <property type="entry name" value="GTP_EFTU"/>
    <property type="match status" value="1"/>
</dbReference>
<dbReference type="Pfam" id="PF03144">
    <property type="entry name" value="GTP_EFTU_D2"/>
    <property type="match status" value="1"/>
</dbReference>
<dbReference type="Pfam" id="PF03143">
    <property type="entry name" value="GTP_EFTU_D3"/>
    <property type="match status" value="1"/>
</dbReference>
<dbReference type="PRINTS" id="PR00315">
    <property type="entry name" value="ELONGATNFCT"/>
</dbReference>
<dbReference type="SUPFAM" id="SSF50465">
    <property type="entry name" value="EF-Tu/eEF-1alpha/eIF2-gamma C-terminal domain"/>
    <property type="match status" value="1"/>
</dbReference>
<dbReference type="SUPFAM" id="SSF52540">
    <property type="entry name" value="P-loop containing nucleoside triphosphate hydrolases"/>
    <property type="match status" value="1"/>
</dbReference>
<dbReference type="SUPFAM" id="SSF50447">
    <property type="entry name" value="Translation proteins"/>
    <property type="match status" value="1"/>
</dbReference>
<dbReference type="PROSITE" id="PS00301">
    <property type="entry name" value="G_TR_1"/>
    <property type="match status" value="1"/>
</dbReference>
<dbReference type="PROSITE" id="PS51722">
    <property type="entry name" value="G_TR_2"/>
    <property type="match status" value="1"/>
</dbReference>
<keyword id="KW-0963">Cytoplasm</keyword>
<keyword id="KW-0251">Elongation factor</keyword>
<keyword id="KW-0342">GTP-binding</keyword>
<keyword id="KW-0378">Hydrolase</keyword>
<keyword id="KW-0460">Magnesium</keyword>
<keyword id="KW-0479">Metal-binding</keyword>
<keyword id="KW-0547">Nucleotide-binding</keyword>
<keyword id="KW-0648">Protein biosynthesis</keyword>
<comment type="function">
    <text evidence="2">GTP hydrolase that promotes the GTP-dependent binding of aminoacyl-tRNA to the A-site of ribosomes during protein biosynthesis.</text>
</comment>
<comment type="catalytic activity">
    <reaction evidence="2">
        <text>GTP + H2O = GDP + phosphate + H(+)</text>
        <dbReference type="Rhea" id="RHEA:19669"/>
        <dbReference type="ChEBI" id="CHEBI:15377"/>
        <dbReference type="ChEBI" id="CHEBI:15378"/>
        <dbReference type="ChEBI" id="CHEBI:37565"/>
        <dbReference type="ChEBI" id="CHEBI:43474"/>
        <dbReference type="ChEBI" id="CHEBI:58189"/>
        <dbReference type="EC" id="3.6.5.3"/>
    </reaction>
    <physiologicalReaction direction="left-to-right" evidence="2">
        <dbReference type="Rhea" id="RHEA:19670"/>
    </physiologicalReaction>
</comment>
<comment type="subunit">
    <text evidence="2">Monomer.</text>
</comment>
<comment type="subcellular location">
    <subcellularLocation>
        <location evidence="2">Cytoplasm</location>
    </subcellularLocation>
</comment>
<comment type="similarity">
    <text evidence="2">Belongs to the TRAFAC class translation factor GTPase superfamily. Classic translation factor GTPase family. EF-Tu/EF-1A subfamily.</text>
</comment>
<evidence type="ECO:0000250" key="1"/>
<evidence type="ECO:0000255" key="2">
    <source>
        <dbReference type="HAMAP-Rule" id="MF_00118"/>
    </source>
</evidence>
<reference key="1">
    <citation type="journal article" date="2004" name="Nat. Genet.">
        <title>Comparison of genome degradation in Paratyphi A and Typhi, human-restricted serovars of Salmonella enterica that cause typhoid.</title>
        <authorList>
            <person name="McClelland M."/>
            <person name="Sanderson K.E."/>
            <person name="Clifton S.W."/>
            <person name="Latreille P."/>
            <person name="Porwollik S."/>
            <person name="Sabo A."/>
            <person name="Meyer R."/>
            <person name="Bieri T."/>
            <person name="Ozersky P."/>
            <person name="McLellan M."/>
            <person name="Harkins C.R."/>
            <person name="Wang C."/>
            <person name="Nguyen C."/>
            <person name="Berghoff A."/>
            <person name="Elliott G."/>
            <person name="Kohlberg S."/>
            <person name="Strong C."/>
            <person name="Du F."/>
            <person name="Carter J."/>
            <person name="Kremizki C."/>
            <person name="Layman D."/>
            <person name="Leonard S."/>
            <person name="Sun H."/>
            <person name="Fulton L."/>
            <person name="Nash W."/>
            <person name="Miner T."/>
            <person name="Minx P."/>
            <person name="Delehaunty K."/>
            <person name="Fronick C."/>
            <person name="Magrini V."/>
            <person name="Nhan M."/>
            <person name="Warren W."/>
            <person name="Florea L."/>
            <person name="Spieth J."/>
            <person name="Wilson R.K."/>
        </authorList>
    </citation>
    <scope>NUCLEOTIDE SEQUENCE [LARGE SCALE GENOMIC DNA]</scope>
    <source>
        <strain>ATCC 9150 / SARB42</strain>
    </source>
</reference>
<name>EFTU_SALPA</name>
<sequence>MSKEKFERTKPHVNVGTIGHVDHGKTTLTAAITTVLAKTYGGAARAFDQIDNAPEEKARGITINTSHVEYDTPTRHYAHVDCPGHADYVKNMITGAAQMDGAILVVAATDGPMPQTREHILLGRQVGVPYIIVFLNKCDMVDDEELLELVEMEVRELLSQYDFPGDDTPIVRGSALKALEGDAEWEAKIIELAGFLDSYIPEPERAIDKPFLLPIEDVFSISGRGTVVTGRVERGIIKVGEEVEIVGIKETQKSTCTGVEMFRKLLDEGRAGENVGVLLRGIKREEIERGQVLAKPGTIKPHTKFESEVYILSKDEGGRHTPFFKGYRPQFYFRTTDVTGTIELPEGVEMVMPGDNIKMVVTLIHPIAMDDGLRFAIREGGRTVGAGVVAKVLG</sequence>
<organism>
    <name type="scientific">Salmonella paratyphi A (strain ATCC 9150 / SARB42)</name>
    <dbReference type="NCBI Taxonomy" id="295319"/>
    <lineage>
        <taxon>Bacteria</taxon>
        <taxon>Pseudomonadati</taxon>
        <taxon>Pseudomonadota</taxon>
        <taxon>Gammaproteobacteria</taxon>
        <taxon>Enterobacterales</taxon>
        <taxon>Enterobacteriaceae</taxon>
        <taxon>Salmonella</taxon>
    </lineage>
</organism>